<gene>
    <name evidence="4" type="primary">bacC</name>
</gene>
<accession>Q8KWS9</accession>
<comment type="function">
    <text evidence="2">Part of the bacABCDEFG operon responsible for the biosynthesis of bacilysin, an irreversible inactivator of the glutaminase domain of glucosamine synthetase. Catalyzes the dehydrogenation of the C7-hydroxyl group in the 4S-tetrahydrotyrosine (4S-H4Tyr) to yield anticapsin (epoxycyclohexanonyl-Ala).</text>
</comment>
<comment type="catalytic activity">
    <reaction evidence="2">
        <text>L-dihydroanticapsin + NAD(+) = L-anticapsin + NADH + H(+)</text>
        <dbReference type="Rhea" id="RHEA:44628"/>
        <dbReference type="ChEBI" id="CHEBI:15378"/>
        <dbReference type="ChEBI" id="CHEBI:57540"/>
        <dbReference type="ChEBI" id="CHEBI:57945"/>
        <dbReference type="ChEBI" id="CHEBI:84310"/>
        <dbReference type="ChEBI" id="CHEBI:84358"/>
        <dbReference type="EC" id="1.1.1.385"/>
    </reaction>
</comment>
<comment type="pathway">
    <text evidence="6">Antibiotic biosynthesis; bacilysin biosynthesis.</text>
</comment>
<comment type="similarity">
    <text evidence="5">Belongs to the short-chain dehydrogenases/reductases (SDR) family.</text>
</comment>
<evidence type="ECO:0000250" key="1">
    <source>
        <dbReference type="UniProtKB" id="P16544"/>
    </source>
</evidence>
<evidence type="ECO:0000250" key="2">
    <source>
        <dbReference type="UniProtKB" id="P39640"/>
    </source>
</evidence>
<evidence type="ECO:0000255" key="3">
    <source>
        <dbReference type="PROSITE-ProRule" id="PRU10001"/>
    </source>
</evidence>
<evidence type="ECO:0000303" key="4">
    <source>
    </source>
</evidence>
<evidence type="ECO:0000305" key="5"/>
<evidence type="ECO:0000305" key="6">
    <source>
    </source>
</evidence>
<protein>
    <recommendedName>
        <fullName evidence="2">Dihydroanticapsin 7-dehydrogenase</fullName>
        <ecNumber evidence="2">1.1.1.385</ecNumber>
    </recommendedName>
    <alternativeName>
        <fullName evidence="4">Bacilysin biosynthesis oxidoreductase BacC</fullName>
    </alternativeName>
</protein>
<organism>
    <name type="scientific">Bacillus amyloliquefaciens</name>
    <name type="common">Bacillus velezensis</name>
    <dbReference type="NCBI Taxonomy" id="1390"/>
    <lineage>
        <taxon>Bacteria</taxon>
        <taxon>Bacillati</taxon>
        <taxon>Bacillota</taxon>
        <taxon>Bacilli</taxon>
        <taxon>Bacillales</taxon>
        <taxon>Bacillaceae</taxon>
        <taxon>Bacillus</taxon>
        <taxon>Bacillus amyloliquefaciens group</taxon>
    </lineage>
</organism>
<feature type="chain" id="PRO_0000054521" description="Dihydroanticapsin 7-dehydrogenase">
    <location>
        <begin position="1"/>
        <end position="254"/>
    </location>
</feature>
<feature type="active site" description="Proton acceptor" evidence="3">
    <location>
        <position position="152"/>
    </location>
</feature>
<feature type="binding site" evidence="1">
    <location>
        <begin position="9"/>
        <end position="31"/>
    </location>
    <ligand>
        <name>NAD(+)</name>
        <dbReference type="ChEBI" id="CHEBI:57540"/>
    </ligand>
</feature>
<feature type="binding site" evidence="1">
    <location>
        <position position="139"/>
    </location>
    <ligand>
        <name>substrate</name>
    </ligand>
</feature>
<dbReference type="EC" id="1.1.1.385" evidence="2"/>
<dbReference type="EMBL" id="AF396779">
    <property type="protein sequence ID" value="AAM90575.1"/>
    <property type="molecule type" value="Genomic_DNA"/>
</dbReference>
<dbReference type="SMR" id="Q8KWS9"/>
<dbReference type="STRING" id="692420.BAMF_3605"/>
<dbReference type="eggNOG" id="COG1028">
    <property type="taxonomic scope" value="Bacteria"/>
</dbReference>
<dbReference type="UniPathway" id="UPA00100"/>
<dbReference type="GO" id="GO:0016491">
    <property type="term" value="F:oxidoreductase activity"/>
    <property type="evidence" value="ECO:0007669"/>
    <property type="project" value="UniProtKB-KW"/>
</dbReference>
<dbReference type="GO" id="GO:0017000">
    <property type="term" value="P:antibiotic biosynthetic process"/>
    <property type="evidence" value="ECO:0007669"/>
    <property type="project" value="UniProtKB-KW"/>
</dbReference>
<dbReference type="CDD" id="cd05233">
    <property type="entry name" value="SDR_c"/>
    <property type="match status" value="1"/>
</dbReference>
<dbReference type="FunFam" id="3.40.50.720:FF:000084">
    <property type="entry name" value="Short-chain dehydrogenase reductase"/>
    <property type="match status" value="1"/>
</dbReference>
<dbReference type="Gene3D" id="3.40.50.720">
    <property type="entry name" value="NAD(P)-binding Rossmann-like Domain"/>
    <property type="match status" value="1"/>
</dbReference>
<dbReference type="InterPro" id="IPR036291">
    <property type="entry name" value="NAD(P)-bd_dom_sf"/>
</dbReference>
<dbReference type="InterPro" id="IPR002347">
    <property type="entry name" value="SDR_fam"/>
</dbReference>
<dbReference type="NCBIfam" id="NF033173">
    <property type="entry name" value="anticapsin_BacC"/>
    <property type="match status" value="1"/>
</dbReference>
<dbReference type="NCBIfam" id="NF005559">
    <property type="entry name" value="PRK07231.1"/>
    <property type="match status" value="1"/>
</dbReference>
<dbReference type="PANTHER" id="PTHR24321">
    <property type="entry name" value="DEHYDROGENASES, SHORT CHAIN"/>
    <property type="match status" value="1"/>
</dbReference>
<dbReference type="PANTHER" id="PTHR24321:SF8">
    <property type="entry name" value="ESTRADIOL 17-BETA-DEHYDROGENASE 8-RELATED"/>
    <property type="match status" value="1"/>
</dbReference>
<dbReference type="Pfam" id="PF13561">
    <property type="entry name" value="adh_short_C2"/>
    <property type="match status" value="1"/>
</dbReference>
<dbReference type="PRINTS" id="PR00081">
    <property type="entry name" value="GDHRDH"/>
</dbReference>
<dbReference type="PRINTS" id="PR00080">
    <property type="entry name" value="SDRFAMILY"/>
</dbReference>
<dbReference type="SUPFAM" id="SSF51735">
    <property type="entry name" value="NAD(P)-binding Rossmann-fold domains"/>
    <property type="match status" value="1"/>
</dbReference>
<name>BACC_BACAM</name>
<proteinExistence type="evidence at protein level"/>
<reference key="1">
    <citation type="journal article" date="2005" name="Arch. Microbiol.">
        <title>bac genes for recombinant bacilysin and anticapsin production in Bacillus host strains.</title>
        <authorList>
            <person name="Steinborn G."/>
            <person name="Hajirezaei M.-R."/>
            <person name="Hofemeister J."/>
        </authorList>
    </citation>
    <scope>NUCLEOTIDE SEQUENCE [GENOMIC DNA]</scope>
    <scope>FUNCTION IN BACILYSIN PRODUCTION</scope>
    <scope>GENE NAME</scope>
    <source>
        <strain>ATCC 15841</strain>
    </source>
</reference>
<sequence>MNLTDKTVLITGGASGIGYAAVQAFLNQQANVVVADIDEAQGEAMIRKENNDRLHFVQTDITNEPACQNAILSAVDKFGGLDVLINNAGIEIVAPIHEMELSDWNKVLNVNLTGMFLMSKHALKYMLKSGKGNIINTCSVGGVVAWPDIPAYNASKGGVLQTDAFYRPSIIAKHNIRVNCVCPGIIDTPLNEKSFLENNEGTLEEIKKEKAKVNPLLRLGKPEEIANVMLFLASDLSSYMTGSAITADGGYTAQ</sequence>
<keyword id="KW-0045">Antibiotic biosynthesis</keyword>
<keyword id="KW-0520">NAD</keyword>
<keyword id="KW-0560">Oxidoreductase</keyword>